<reference key="1">
    <citation type="journal article" date="2007" name="Nature">
        <title>The grapevine genome sequence suggests ancestral hexaploidization in major angiosperm phyla.</title>
        <authorList>
            <person name="Jaillon O."/>
            <person name="Aury J.-M."/>
            <person name="Noel B."/>
            <person name="Policriti A."/>
            <person name="Clepet C."/>
            <person name="Casagrande A."/>
            <person name="Choisne N."/>
            <person name="Aubourg S."/>
            <person name="Vitulo N."/>
            <person name="Jubin C."/>
            <person name="Vezzi A."/>
            <person name="Legeai F."/>
            <person name="Hugueney P."/>
            <person name="Dasilva C."/>
            <person name="Horner D."/>
            <person name="Mica E."/>
            <person name="Jublot D."/>
            <person name="Poulain J."/>
            <person name="Bruyere C."/>
            <person name="Billault A."/>
            <person name="Segurens B."/>
            <person name="Gouyvenoux M."/>
            <person name="Ugarte E."/>
            <person name="Cattonaro F."/>
            <person name="Anthouard V."/>
            <person name="Vico V."/>
            <person name="Del Fabbro C."/>
            <person name="Alaux M."/>
            <person name="Di Gaspero G."/>
            <person name="Dumas V."/>
            <person name="Felice N."/>
            <person name="Paillard S."/>
            <person name="Juman I."/>
            <person name="Moroldo M."/>
            <person name="Scalabrin S."/>
            <person name="Canaguier A."/>
            <person name="Le Clainche I."/>
            <person name="Malacrida G."/>
            <person name="Durand E."/>
            <person name="Pesole G."/>
            <person name="Laucou V."/>
            <person name="Chatelet P."/>
            <person name="Merdinoglu D."/>
            <person name="Delledonne M."/>
            <person name="Pezzotti M."/>
            <person name="Lecharny A."/>
            <person name="Scarpelli C."/>
            <person name="Artiguenave F."/>
            <person name="Pe M.E."/>
            <person name="Valle G."/>
            <person name="Morgante M."/>
            <person name="Caboche M."/>
            <person name="Adam-Blondon A.-F."/>
            <person name="Weissenbach J."/>
            <person name="Quetier F."/>
            <person name="Wincker P."/>
        </authorList>
    </citation>
    <scope>NUCLEOTIDE SEQUENCE [LARGE SCALE GENOMIC DNA]</scope>
    <source>
        <strain>cv. Pinot noir / PN40024</strain>
    </source>
</reference>
<reference key="2">
    <citation type="journal article" date="2007" name="PLoS ONE">
        <title>A high quality draft consensus sequence of the genome of a heterozygous grapevine variety.</title>
        <authorList>
            <person name="Velasco R."/>
            <person name="Zharkikh A."/>
            <person name="Troggio M."/>
            <person name="Cartwright D.A."/>
            <person name="Cestaro A."/>
            <person name="Pruss D."/>
            <person name="Pindo M."/>
            <person name="FitzGerald L.M."/>
            <person name="Vezzulli S."/>
            <person name="Reid J."/>
            <person name="Malacarne G."/>
            <person name="Iliev D."/>
            <person name="Coppola G."/>
            <person name="Wardell B."/>
            <person name="Micheletti D."/>
            <person name="Macalma T."/>
            <person name="Facci M."/>
            <person name="Mitchell J.T."/>
            <person name="Perazzolli M."/>
            <person name="Eldredge G."/>
            <person name="Gatto P."/>
            <person name="Oyzerski R."/>
            <person name="Moretto M."/>
            <person name="Gutin N."/>
            <person name="Stefanini M."/>
            <person name="Chen Y."/>
            <person name="Segala C."/>
            <person name="Davenport C."/>
            <person name="Dematte L."/>
            <person name="Mraz A."/>
            <person name="Battilana J."/>
            <person name="Stormo K."/>
            <person name="Costa F."/>
            <person name="Tao Q."/>
            <person name="Si-Ammour A."/>
            <person name="Harkins T."/>
            <person name="Lackey A."/>
            <person name="Perbost C."/>
            <person name="Taillon B."/>
            <person name="Stella A."/>
            <person name="Solovyev V."/>
            <person name="Fawcett J.A."/>
            <person name="Sterck L."/>
            <person name="Vandepoele K."/>
            <person name="Grando S.M."/>
            <person name="Toppo S."/>
            <person name="Moser C."/>
            <person name="Lanchbury J."/>
            <person name="Bogden R."/>
            <person name="Skolnick M."/>
            <person name="Sgaramella V."/>
            <person name="Bhatnagar S.K."/>
            <person name="Fontana P."/>
            <person name="Gutin A."/>
            <person name="Van de Peer Y."/>
            <person name="Salamini F."/>
            <person name="Viola R."/>
        </authorList>
    </citation>
    <scope>NUCLEOTIDE SEQUENCE [LARGE SCALE GENOMIC DNA]</scope>
    <source>
        <strain>cv. Pinot noir</strain>
    </source>
</reference>
<reference key="3">
    <citation type="submission" date="2007-01" db="EMBL/GenBank/DDBJ databases">
        <title>Expressed sequence tags from grapevine (Vitis vinifera cv. Cabernet Sauvignon).</title>
        <authorList>
            <person name="Reid K.E."/>
            <person name="Liao N."/>
            <person name="Peng F."/>
            <person name="Schlosser J."/>
            <person name="Kirkpatrick R."/>
            <person name="Shukin R."/>
            <person name="Barber S."/>
            <person name="Holt R."/>
            <person name="Siddiqui A."/>
            <person name="Jones S."/>
            <person name="Marra M."/>
            <person name="Bowen P."/>
            <person name="Bohlmann J."/>
            <person name="Martinez Zapater J.M."/>
            <person name="Lund S.T."/>
        </authorList>
    </citation>
    <scope>NUCLEOTIDE SEQUENCE [LARGE SCALE MRNA]</scope>
    <source>
        <strain>cv. Cabernet Sauvignon</strain>
    </source>
</reference>
<reference key="4">
    <citation type="journal article" date="2014" name="Plant Physiol.">
        <title>Functional and evolutionary analysis of the CASPARIAN STRIP MEMBRANE DOMAIN PROTEIN family.</title>
        <authorList>
            <person name="Roppolo D."/>
            <person name="Boeckmann B."/>
            <person name="Pfister A."/>
            <person name="Boutet E."/>
            <person name="Rubio M.C."/>
            <person name="Denervaud-Tendon V."/>
            <person name="Vermeer J.E."/>
            <person name="Gheyselinck J."/>
            <person name="Xenarios I."/>
            <person name="Geldner N."/>
        </authorList>
    </citation>
    <scope>GENE FAMILY</scope>
    <scope>NOMENCLATURE</scope>
</reference>
<proteinExistence type="evidence at transcript level"/>
<keyword id="KW-1003">Cell membrane</keyword>
<keyword id="KW-0325">Glycoprotein</keyword>
<keyword id="KW-0472">Membrane</keyword>
<keyword id="KW-1185">Reference proteome</keyword>
<keyword id="KW-0812">Transmembrane</keyword>
<keyword id="KW-1133">Transmembrane helix</keyword>
<dbReference type="EMBL" id="FN596494">
    <property type="protein sequence ID" value="CCB59439.1"/>
    <property type="molecule type" value="Genomic_DNA"/>
</dbReference>
<dbReference type="EMBL" id="FN597028">
    <property type="status" value="NOT_ANNOTATED_CDS"/>
    <property type="molecule type" value="Genomic_DNA"/>
</dbReference>
<dbReference type="EMBL" id="AM486569">
    <property type="protein sequence ID" value="CAN71023.1"/>
    <property type="molecule type" value="Genomic_DNA"/>
</dbReference>
<dbReference type="EMBL" id="EC952587">
    <property type="status" value="NOT_ANNOTATED_CDS"/>
    <property type="molecule type" value="mRNA"/>
</dbReference>
<dbReference type="RefSeq" id="XP_002284038.1">
    <property type="nucleotide sequence ID" value="XM_002284002.4"/>
</dbReference>
<dbReference type="SMR" id="A7P756"/>
<dbReference type="PaxDb" id="29760-VIT_09s0002g03780.t01"/>
<dbReference type="EnsemblPlants" id="Vitvi09g00314_t001">
    <property type="protein sequence ID" value="Vitvi09g00314_P001"/>
    <property type="gene ID" value="Vitvi09g00314"/>
</dbReference>
<dbReference type="Gramene" id="Vitvi09g00314_t001">
    <property type="protein sequence ID" value="Vitvi09g00314_P001"/>
    <property type="gene ID" value="Vitvi09g00314"/>
</dbReference>
<dbReference type="eggNOG" id="ENOG502RN9B">
    <property type="taxonomic scope" value="Eukaryota"/>
</dbReference>
<dbReference type="HOGENOM" id="CLU_114729_1_0_1"/>
<dbReference type="InParanoid" id="A7P756"/>
<dbReference type="OrthoDB" id="1918787at2759"/>
<dbReference type="Proteomes" id="UP000009183">
    <property type="component" value="Chromosome 9"/>
</dbReference>
<dbReference type="GO" id="GO:0005886">
    <property type="term" value="C:plasma membrane"/>
    <property type="evidence" value="ECO:0007669"/>
    <property type="project" value="UniProtKB-SubCell"/>
</dbReference>
<dbReference type="InterPro" id="IPR006459">
    <property type="entry name" value="CASP/CASPL"/>
</dbReference>
<dbReference type="InterPro" id="IPR006702">
    <property type="entry name" value="CASP_dom"/>
</dbReference>
<dbReference type="NCBIfam" id="TIGR01569">
    <property type="entry name" value="A_tha_TIGR01569"/>
    <property type="match status" value="1"/>
</dbReference>
<dbReference type="PANTHER" id="PTHR33573:SF48">
    <property type="entry name" value="CASP-LIKE PROTEIN 3A1"/>
    <property type="match status" value="1"/>
</dbReference>
<dbReference type="PANTHER" id="PTHR33573">
    <property type="entry name" value="CASP-LIKE PROTEIN 4A4"/>
    <property type="match status" value="1"/>
</dbReference>
<dbReference type="Pfam" id="PF04535">
    <property type="entry name" value="CASP_dom"/>
    <property type="match status" value="1"/>
</dbReference>
<name>CSPLD_VITVI</name>
<evidence type="ECO:0000250" key="1"/>
<evidence type="ECO:0000255" key="2"/>
<evidence type="ECO:0000305" key="3"/>
<organism>
    <name type="scientific">Vitis vinifera</name>
    <name type="common">Grape</name>
    <dbReference type="NCBI Taxonomy" id="29760"/>
    <lineage>
        <taxon>Eukaryota</taxon>
        <taxon>Viridiplantae</taxon>
        <taxon>Streptophyta</taxon>
        <taxon>Embryophyta</taxon>
        <taxon>Tracheophyta</taxon>
        <taxon>Spermatophyta</taxon>
        <taxon>Magnoliopsida</taxon>
        <taxon>eudicotyledons</taxon>
        <taxon>Gunneridae</taxon>
        <taxon>Pentapetalae</taxon>
        <taxon>rosids</taxon>
        <taxon>Vitales</taxon>
        <taxon>Vitaceae</taxon>
        <taxon>Viteae</taxon>
        <taxon>Vitis</taxon>
    </lineage>
</organism>
<sequence>MNGLKTPPEIGIQLPEAKVAAETGTMSGPLVPPRSDRSVRRGTDVAHVVLRFVCLLTSVIALSLMATAKEAASISIYGFLLPVSSKWSFSDSFEYLVGVSAAVAAHALLQLIISVSRLLRKSPVIPSRNHAWLIFAGDQAFAYAMLSAGSAASGVTNLNRTGIRHSPLPNFCKPLRSFCDHVAASIAFTFFSCFLLATSAILDVIWLSKY</sequence>
<protein>
    <recommendedName>
        <fullName>CASP-like protein 3A1</fullName>
        <shortName>VvCASPL3A1</shortName>
    </recommendedName>
</protein>
<comment type="subunit">
    <text evidence="1">Homodimer and heterodimers.</text>
</comment>
<comment type="subcellular location">
    <subcellularLocation>
        <location evidence="1">Cell membrane</location>
        <topology evidence="1">Multi-pass membrane protein</topology>
    </subcellularLocation>
</comment>
<comment type="similarity">
    <text evidence="3">Belongs to the Casparian strip membrane proteins (CASP) family.</text>
</comment>
<feature type="chain" id="PRO_0000370315" description="CASP-like protein 3A1">
    <location>
        <begin position="1"/>
        <end position="210"/>
    </location>
</feature>
<feature type="topological domain" description="Cytoplasmic" evidence="2">
    <location>
        <begin position="1"/>
        <end position="44"/>
    </location>
</feature>
<feature type="transmembrane region" description="Helical" evidence="2">
    <location>
        <begin position="45"/>
        <end position="65"/>
    </location>
</feature>
<feature type="topological domain" description="Extracellular" evidence="2">
    <location>
        <begin position="66"/>
        <end position="94"/>
    </location>
</feature>
<feature type="transmembrane region" description="Helical" evidence="2">
    <location>
        <begin position="95"/>
        <end position="115"/>
    </location>
</feature>
<feature type="topological domain" description="Cytoplasmic" evidence="2">
    <location>
        <begin position="116"/>
        <end position="130"/>
    </location>
</feature>
<feature type="transmembrane region" description="Helical" evidence="2">
    <location>
        <begin position="131"/>
        <end position="151"/>
    </location>
</feature>
<feature type="topological domain" description="Extracellular" evidence="2">
    <location>
        <begin position="152"/>
        <end position="185"/>
    </location>
</feature>
<feature type="transmembrane region" description="Helical" evidence="2">
    <location>
        <begin position="186"/>
        <end position="206"/>
    </location>
</feature>
<feature type="topological domain" description="Cytoplasmic" evidence="2">
    <location>
        <begin position="207"/>
        <end position="210"/>
    </location>
</feature>
<feature type="glycosylation site" description="N-linked (GlcNAc...) asparagine" evidence="2">
    <location>
        <position position="159"/>
    </location>
</feature>
<feature type="sequence conflict" description="In Ref. 2; CAN71023." evidence="3" ref="2">
    <original>G</original>
    <variation>V</variation>
    <location>
        <position position="11"/>
    </location>
</feature>
<feature type="sequence conflict" description="In Ref. 2; CAN71023." evidence="3" ref="2">
    <original>P</original>
    <variation>S</variation>
    <location>
        <position position="123"/>
    </location>
</feature>
<gene>
    <name type="ordered locus">VIT_09s0002g03780</name>
    <name type="ORF">GSVIVT00034332001</name>
    <name type="ORF">VITISV_012198</name>
</gene>
<accession>A7P756</accession>
<accession>A5C927</accession>
<accession>F6HYB6</accession>